<protein>
    <recommendedName>
        <fullName evidence="1">Pyrimidine monooxygenase RutA</fullName>
        <ecNumber evidence="1">1.14.99.46</ecNumber>
    </recommendedName>
</protein>
<keyword id="KW-0285">Flavoprotein</keyword>
<keyword id="KW-0288">FMN</keyword>
<keyword id="KW-0503">Monooxygenase</keyword>
<keyword id="KW-0521">NADP</keyword>
<keyword id="KW-0560">Oxidoreductase</keyword>
<keyword id="KW-1185">Reference proteome</keyword>
<dbReference type="EC" id="1.14.99.46" evidence="1"/>
<dbReference type="EMBL" id="CU928145">
    <property type="protein sequence ID" value="CAU96984.1"/>
    <property type="molecule type" value="Genomic_DNA"/>
</dbReference>
<dbReference type="SMR" id="B7LFC2"/>
<dbReference type="KEGG" id="eck:EC55989_1123"/>
<dbReference type="HOGENOM" id="CLU_027853_1_1_6"/>
<dbReference type="Proteomes" id="UP000000746">
    <property type="component" value="Chromosome"/>
</dbReference>
<dbReference type="GO" id="GO:0008726">
    <property type="term" value="F:alkanesulfonate monooxygenase activity"/>
    <property type="evidence" value="ECO:0007669"/>
    <property type="project" value="TreeGrafter"/>
</dbReference>
<dbReference type="GO" id="GO:0052614">
    <property type="term" value="F:uracil oxygenase activity"/>
    <property type="evidence" value="ECO:0007669"/>
    <property type="project" value="UniProtKB-EC"/>
</dbReference>
<dbReference type="GO" id="GO:0046306">
    <property type="term" value="P:alkanesulfonate catabolic process"/>
    <property type="evidence" value="ECO:0007669"/>
    <property type="project" value="TreeGrafter"/>
</dbReference>
<dbReference type="GO" id="GO:0019740">
    <property type="term" value="P:nitrogen utilization"/>
    <property type="evidence" value="ECO:0007669"/>
    <property type="project" value="UniProtKB-UniRule"/>
</dbReference>
<dbReference type="GO" id="GO:0006212">
    <property type="term" value="P:uracil catabolic process"/>
    <property type="evidence" value="ECO:0007669"/>
    <property type="project" value="UniProtKB-UniRule"/>
</dbReference>
<dbReference type="CDD" id="cd01094">
    <property type="entry name" value="Alkanesulfonate_monoxygenase"/>
    <property type="match status" value="1"/>
</dbReference>
<dbReference type="FunFam" id="3.20.20.30:FF:000003">
    <property type="entry name" value="Pyrimidine monooxygenase RutA"/>
    <property type="match status" value="1"/>
</dbReference>
<dbReference type="Gene3D" id="3.20.20.30">
    <property type="entry name" value="Luciferase-like domain"/>
    <property type="match status" value="1"/>
</dbReference>
<dbReference type="HAMAP" id="MF_01699">
    <property type="entry name" value="RutA"/>
    <property type="match status" value="1"/>
</dbReference>
<dbReference type="InterPro" id="IPR011251">
    <property type="entry name" value="Luciferase-like_dom"/>
</dbReference>
<dbReference type="InterPro" id="IPR036661">
    <property type="entry name" value="Luciferase-like_sf"/>
</dbReference>
<dbReference type="InterPro" id="IPR019914">
    <property type="entry name" value="Pyrimidine_monooxygenase_RutA"/>
</dbReference>
<dbReference type="InterPro" id="IPR050172">
    <property type="entry name" value="SsuD_RutA_monooxygenase"/>
</dbReference>
<dbReference type="NCBIfam" id="TIGR03612">
    <property type="entry name" value="RutA"/>
    <property type="match status" value="1"/>
</dbReference>
<dbReference type="PANTHER" id="PTHR42847">
    <property type="entry name" value="ALKANESULFONATE MONOOXYGENASE"/>
    <property type="match status" value="1"/>
</dbReference>
<dbReference type="PANTHER" id="PTHR42847:SF4">
    <property type="entry name" value="ALKANESULFONATE MONOOXYGENASE-RELATED"/>
    <property type="match status" value="1"/>
</dbReference>
<dbReference type="Pfam" id="PF00296">
    <property type="entry name" value="Bac_luciferase"/>
    <property type="match status" value="1"/>
</dbReference>
<dbReference type="SUPFAM" id="SSF51679">
    <property type="entry name" value="Bacterial luciferase-like"/>
    <property type="match status" value="1"/>
</dbReference>
<accession>B7LFC2</accession>
<evidence type="ECO:0000255" key="1">
    <source>
        <dbReference type="HAMAP-Rule" id="MF_01699"/>
    </source>
</evidence>
<proteinExistence type="inferred from homology"/>
<comment type="function">
    <text evidence="1">Catalyzes the pyrimidine ring opening between N-3 and C-4 by an unusual flavin hydroperoxide-catalyzed mechanism, adding oxygen atoms in the process to yield ureidoacrylate peracid, that immediately reacts with FMN forming ureidoacrylate and FMN-N(5)-oxide. The FMN-N(5)-oxide reacts spontaneously with NADH to produce FMN. Requires the flavin reductase RutF to regenerate FMN in vivo.</text>
</comment>
<comment type="catalytic activity">
    <reaction evidence="1">
        <text>uracil + FMNH2 + NADH + O2 = (Z)-3-ureidoacrylate + FMN + NAD(+) + H2O + H(+)</text>
        <dbReference type="Rhea" id="RHEA:31587"/>
        <dbReference type="ChEBI" id="CHEBI:15377"/>
        <dbReference type="ChEBI" id="CHEBI:15378"/>
        <dbReference type="ChEBI" id="CHEBI:15379"/>
        <dbReference type="ChEBI" id="CHEBI:17568"/>
        <dbReference type="ChEBI" id="CHEBI:57540"/>
        <dbReference type="ChEBI" id="CHEBI:57618"/>
        <dbReference type="ChEBI" id="CHEBI:57945"/>
        <dbReference type="ChEBI" id="CHEBI:58210"/>
        <dbReference type="ChEBI" id="CHEBI:59891"/>
        <dbReference type="EC" id="1.14.99.46"/>
    </reaction>
</comment>
<comment type="catalytic activity">
    <reaction evidence="1">
        <text>thymine + FMNH2 + NADH + O2 = (Z)-2-methylureidoacrylate + FMN + NAD(+) + H2O + H(+)</text>
        <dbReference type="Rhea" id="RHEA:31599"/>
        <dbReference type="ChEBI" id="CHEBI:15377"/>
        <dbReference type="ChEBI" id="CHEBI:15378"/>
        <dbReference type="ChEBI" id="CHEBI:15379"/>
        <dbReference type="ChEBI" id="CHEBI:17821"/>
        <dbReference type="ChEBI" id="CHEBI:57540"/>
        <dbReference type="ChEBI" id="CHEBI:57618"/>
        <dbReference type="ChEBI" id="CHEBI:57945"/>
        <dbReference type="ChEBI" id="CHEBI:58210"/>
        <dbReference type="ChEBI" id="CHEBI:143783"/>
        <dbReference type="EC" id="1.14.99.46"/>
    </reaction>
</comment>
<comment type="induction">
    <text evidence="1">Up-regulated by the nitrogen regulatory protein C (NtrC also called GlnG) and repressed by RutR.</text>
</comment>
<comment type="similarity">
    <text evidence="1">Belongs to the NtaA/SnaA/DszA monooxygenase family. RutA subfamily.</text>
</comment>
<sequence>MQDAAPRLTFTLRDEERLMMKIGVFVPIGNNGWLISTHAPQYMPTFELNKAIVQKAEHYHFDFALSMIKLRGFGGKTEFWDHNLESFTLMAGLAAVTSRIQIYATAATLTLPPAIVARMAATIDSISGGRFGVNLVTGWQKPEYEQMGIWPGDDYFSRRYDYLTEYVQVLRDLWGTGKSDFKGDFFTMNDCRVSPQPSVPMKVICAGQSDAGMAFSAQYADFNFCFGKGVNTPTAFAPTAARMKQAAEQTGRDVGSYVLFMVIADETDDAARAKWEHYKAGADEEALSWLTEQSQKDTRSGTDTNVRQMADPTSAVNINMGTLVGSYASVARMLDEVASVPGAEGVLLTFDDFLSGIETFGERIQPLMQCRAHLPALTQEVA</sequence>
<organism>
    <name type="scientific">Escherichia coli (strain 55989 / EAEC)</name>
    <dbReference type="NCBI Taxonomy" id="585055"/>
    <lineage>
        <taxon>Bacteria</taxon>
        <taxon>Pseudomonadati</taxon>
        <taxon>Pseudomonadota</taxon>
        <taxon>Gammaproteobacteria</taxon>
        <taxon>Enterobacterales</taxon>
        <taxon>Enterobacteriaceae</taxon>
        <taxon>Escherichia</taxon>
    </lineage>
</organism>
<feature type="chain" id="PRO_0000402593" description="Pyrimidine monooxygenase RutA">
    <location>
        <begin position="1"/>
        <end position="382"/>
    </location>
</feature>
<feature type="binding site" evidence="1">
    <location>
        <begin position="68"/>
        <end position="69"/>
    </location>
    <ligand>
        <name>FMN</name>
        <dbReference type="ChEBI" id="CHEBI:58210"/>
    </ligand>
</feature>
<feature type="binding site" evidence="1">
    <location>
        <position position="134"/>
    </location>
    <ligand>
        <name>FMN</name>
        <dbReference type="ChEBI" id="CHEBI:58210"/>
    </ligand>
</feature>
<feature type="binding site" evidence="1">
    <location>
        <position position="143"/>
    </location>
    <ligand>
        <name>FMN</name>
        <dbReference type="ChEBI" id="CHEBI:58210"/>
    </ligand>
</feature>
<feature type="binding site" evidence="1">
    <location>
        <begin position="159"/>
        <end position="160"/>
    </location>
    <ligand>
        <name>FMN</name>
        <dbReference type="ChEBI" id="CHEBI:58210"/>
    </ligand>
</feature>
<feature type="binding site" evidence="1">
    <location>
        <position position="209"/>
    </location>
    <ligand>
        <name>FMN</name>
        <dbReference type="ChEBI" id="CHEBI:58210"/>
    </ligand>
</feature>
<gene>
    <name evidence="1" type="primary">rutA</name>
    <name type="ordered locus">EC55989_1123</name>
</gene>
<reference key="1">
    <citation type="journal article" date="2009" name="PLoS Genet.">
        <title>Organised genome dynamics in the Escherichia coli species results in highly diverse adaptive paths.</title>
        <authorList>
            <person name="Touchon M."/>
            <person name="Hoede C."/>
            <person name="Tenaillon O."/>
            <person name="Barbe V."/>
            <person name="Baeriswyl S."/>
            <person name="Bidet P."/>
            <person name="Bingen E."/>
            <person name="Bonacorsi S."/>
            <person name="Bouchier C."/>
            <person name="Bouvet O."/>
            <person name="Calteau A."/>
            <person name="Chiapello H."/>
            <person name="Clermont O."/>
            <person name="Cruveiller S."/>
            <person name="Danchin A."/>
            <person name="Diard M."/>
            <person name="Dossat C."/>
            <person name="Karoui M.E."/>
            <person name="Frapy E."/>
            <person name="Garry L."/>
            <person name="Ghigo J.M."/>
            <person name="Gilles A.M."/>
            <person name="Johnson J."/>
            <person name="Le Bouguenec C."/>
            <person name="Lescat M."/>
            <person name="Mangenot S."/>
            <person name="Martinez-Jehanne V."/>
            <person name="Matic I."/>
            <person name="Nassif X."/>
            <person name="Oztas S."/>
            <person name="Petit M.A."/>
            <person name="Pichon C."/>
            <person name="Rouy Z."/>
            <person name="Ruf C.S."/>
            <person name="Schneider D."/>
            <person name="Tourret J."/>
            <person name="Vacherie B."/>
            <person name="Vallenet D."/>
            <person name="Medigue C."/>
            <person name="Rocha E.P.C."/>
            <person name="Denamur E."/>
        </authorList>
    </citation>
    <scope>NUCLEOTIDE SEQUENCE [LARGE SCALE GENOMIC DNA]</scope>
    <source>
        <strain>55989 / EAEC</strain>
    </source>
</reference>
<name>RUTA_ECO55</name>